<sequence length="296" mass="34316">MNLQTMIRTLQDYWSEQGCIMLQSYDVEKGAGTMSPYTFLKAIGPEPWKAGYVEPSRRPADGRYGENPNRLFQHHQFQVVMKPSPDNIQELYLGSLEKLGINPLEHDIRFVEDNWENPSLGCAGLGWEVWLDGMEITQFTYFQQVGGLECFPVTSEITYGVERLASYIQDKENVFDLEWTEGISYRDIFFQAEFENSTYAFETSNTDMLLTLFDTYEREATRQMQDGLVFPAYDYVLKCSHTFNLLDARGVVSVTERAQYIGRIRNLARRIAKTFYESREKLGFPLVKEEGGKRHE</sequence>
<organism>
    <name type="scientific">Listeria monocytogenes serotype 4b (strain F2365)</name>
    <dbReference type="NCBI Taxonomy" id="265669"/>
    <lineage>
        <taxon>Bacteria</taxon>
        <taxon>Bacillati</taxon>
        <taxon>Bacillota</taxon>
        <taxon>Bacilli</taxon>
        <taxon>Bacillales</taxon>
        <taxon>Listeriaceae</taxon>
        <taxon>Listeria</taxon>
    </lineage>
</organism>
<accession>Q71ZL1</accession>
<reference key="1">
    <citation type="journal article" date="2004" name="Nucleic Acids Res.">
        <title>Whole genome comparisons of serotype 4b and 1/2a strains of the food-borne pathogen Listeria monocytogenes reveal new insights into the core genome components of this species.</title>
        <authorList>
            <person name="Nelson K.E."/>
            <person name="Fouts D.E."/>
            <person name="Mongodin E.F."/>
            <person name="Ravel J."/>
            <person name="DeBoy R.T."/>
            <person name="Kolonay J.F."/>
            <person name="Rasko D.A."/>
            <person name="Angiuoli S.V."/>
            <person name="Gill S.R."/>
            <person name="Paulsen I.T."/>
            <person name="Peterson J.D."/>
            <person name="White O."/>
            <person name="Nelson W.C."/>
            <person name="Nierman W.C."/>
            <person name="Beanan M.J."/>
            <person name="Brinkac L.M."/>
            <person name="Daugherty S.C."/>
            <person name="Dodson R.J."/>
            <person name="Durkin A.S."/>
            <person name="Madupu R."/>
            <person name="Haft D.H."/>
            <person name="Selengut J."/>
            <person name="Van Aken S.E."/>
            <person name="Khouri H.M."/>
            <person name="Fedorova N."/>
            <person name="Forberger H.A."/>
            <person name="Tran B."/>
            <person name="Kathariou S."/>
            <person name="Wonderling L.D."/>
            <person name="Uhlich G.A."/>
            <person name="Bayles D.O."/>
            <person name="Luchansky J.B."/>
            <person name="Fraser C.M."/>
        </authorList>
    </citation>
    <scope>NUCLEOTIDE SEQUENCE [LARGE SCALE GENOMIC DNA]</scope>
    <source>
        <strain>F2365</strain>
    </source>
</reference>
<comment type="catalytic activity">
    <reaction evidence="1">
        <text>tRNA(Gly) + glycine + ATP = glycyl-tRNA(Gly) + AMP + diphosphate</text>
        <dbReference type="Rhea" id="RHEA:16013"/>
        <dbReference type="Rhea" id="RHEA-COMP:9664"/>
        <dbReference type="Rhea" id="RHEA-COMP:9683"/>
        <dbReference type="ChEBI" id="CHEBI:30616"/>
        <dbReference type="ChEBI" id="CHEBI:33019"/>
        <dbReference type="ChEBI" id="CHEBI:57305"/>
        <dbReference type="ChEBI" id="CHEBI:78442"/>
        <dbReference type="ChEBI" id="CHEBI:78522"/>
        <dbReference type="ChEBI" id="CHEBI:456215"/>
        <dbReference type="EC" id="6.1.1.14"/>
    </reaction>
</comment>
<comment type="subunit">
    <text evidence="1">Tetramer of two alpha and two beta subunits.</text>
</comment>
<comment type="subcellular location">
    <subcellularLocation>
        <location evidence="1">Cytoplasm</location>
    </subcellularLocation>
</comment>
<comment type="similarity">
    <text evidence="1">Belongs to the class-II aminoacyl-tRNA synthetase family.</text>
</comment>
<protein>
    <recommendedName>
        <fullName evidence="1">Glycine--tRNA ligase alpha subunit</fullName>
        <ecNumber evidence="1">6.1.1.14</ecNumber>
    </recommendedName>
    <alternativeName>
        <fullName evidence="1">Glycyl-tRNA synthetase alpha subunit</fullName>
        <shortName evidence="1">GlyRS</shortName>
    </alternativeName>
</protein>
<keyword id="KW-0030">Aminoacyl-tRNA synthetase</keyword>
<keyword id="KW-0067">ATP-binding</keyword>
<keyword id="KW-0963">Cytoplasm</keyword>
<keyword id="KW-0436">Ligase</keyword>
<keyword id="KW-0547">Nucleotide-binding</keyword>
<keyword id="KW-0648">Protein biosynthesis</keyword>
<feature type="chain" id="PRO_0000072847" description="Glycine--tRNA ligase alpha subunit">
    <location>
        <begin position="1"/>
        <end position="296"/>
    </location>
</feature>
<name>SYGA_LISMF</name>
<proteinExistence type="inferred from homology"/>
<dbReference type="EC" id="6.1.1.14" evidence="1"/>
<dbReference type="EMBL" id="AE017262">
    <property type="protein sequence ID" value="AAT04253.1"/>
    <property type="molecule type" value="Genomic_DNA"/>
</dbReference>
<dbReference type="RefSeq" id="WP_003727430.1">
    <property type="nucleotide sequence ID" value="NC_002973.6"/>
</dbReference>
<dbReference type="SMR" id="Q71ZL1"/>
<dbReference type="KEGG" id="lmf:LMOf2365_1478"/>
<dbReference type="HOGENOM" id="CLU_057066_1_0_9"/>
<dbReference type="GO" id="GO:0005829">
    <property type="term" value="C:cytosol"/>
    <property type="evidence" value="ECO:0007669"/>
    <property type="project" value="TreeGrafter"/>
</dbReference>
<dbReference type="GO" id="GO:0005524">
    <property type="term" value="F:ATP binding"/>
    <property type="evidence" value="ECO:0007669"/>
    <property type="project" value="UniProtKB-UniRule"/>
</dbReference>
<dbReference type="GO" id="GO:0140096">
    <property type="term" value="F:catalytic activity, acting on a protein"/>
    <property type="evidence" value="ECO:0007669"/>
    <property type="project" value="UniProtKB-ARBA"/>
</dbReference>
<dbReference type="GO" id="GO:0004820">
    <property type="term" value="F:glycine-tRNA ligase activity"/>
    <property type="evidence" value="ECO:0007669"/>
    <property type="project" value="UniProtKB-UniRule"/>
</dbReference>
<dbReference type="GO" id="GO:0016740">
    <property type="term" value="F:transferase activity"/>
    <property type="evidence" value="ECO:0007669"/>
    <property type="project" value="UniProtKB-ARBA"/>
</dbReference>
<dbReference type="GO" id="GO:0006426">
    <property type="term" value="P:glycyl-tRNA aminoacylation"/>
    <property type="evidence" value="ECO:0007669"/>
    <property type="project" value="UniProtKB-UniRule"/>
</dbReference>
<dbReference type="CDD" id="cd00733">
    <property type="entry name" value="GlyRS_alpha_core"/>
    <property type="match status" value="1"/>
</dbReference>
<dbReference type="FunFam" id="3.30.930.10:FF:000006">
    <property type="entry name" value="Glycine--tRNA ligase alpha subunit"/>
    <property type="match status" value="1"/>
</dbReference>
<dbReference type="Gene3D" id="3.30.930.10">
    <property type="entry name" value="Bira Bifunctional Protein, Domain 2"/>
    <property type="match status" value="1"/>
</dbReference>
<dbReference type="Gene3D" id="1.20.58.180">
    <property type="entry name" value="Class II aaRS and biotin synthetases, domain 2"/>
    <property type="match status" value="1"/>
</dbReference>
<dbReference type="HAMAP" id="MF_00254">
    <property type="entry name" value="Gly_tRNA_synth_alpha"/>
    <property type="match status" value="1"/>
</dbReference>
<dbReference type="InterPro" id="IPR045864">
    <property type="entry name" value="aa-tRNA-synth_II/BPL/LPL"/>
</dbReference>
<dbReference type="InterPro" id="IPR006194">
    <property type="entry name" value="Gly-tRNA-synth_heterodimer"/>
</dbReference>
<dbReference type="InterPro" id="IPR002310">
    <property type="entry name" value="Gly-tRNA_ligase_asu"/>
</dbReference>
<dbReference type="NCBIfam" id="TIGR00388">
    <property type="entry name" value="glyQ"/>
    <property type="match status" value="1"/>
</dbReference>
<dbReference type="NCBIfam" id="NF006827">
    <property type="entry name" value="PRK09348.1"/>
    <property type="match status" value="1"/>
</dbReference>
<dbReference type="PANTHER" id="PTHR30075:SF2">
    <property type="entry name" value="GLYCINE--TRNA LIGASE, CHLOROPLASTIC_MITOCHONDRIAL 2"/>
    <property type="match status" value="1"/>
</dbReference>
<dbReference type="PANTHER" id="PTHR30075">
    <property type="entry name" value="GLYCYL-TRNA SYNTHETASE"/>
    <property type="match status" value="1"/>
</dbReference>
<dbReference type="Pfam" id="PF02091">
    <property type="entry name" value="tRNA-synt_2e"/>
    <property type="match status" value="1"/>
</dbReference>
<dbReference type="PRINTS" id="PR01044">
    <property type="entry name" value="TRNASYNTHGA"/>
</dbReference>
<dbReference type="SUPFAM" id="SSF55681">
    <property type="entry name" value="Class II aaRS and biotin synthetases"/>
    <property type="match status" value="1"/>
</dbReference>
<dbReference type="PROSITE" id="PS50861">
    <property type="entry name" value="AA_TRNA_LIGASE_II_GLYAB"/>
    <property type="match status" value="1"/>
</dbReference>
<gene>
    <name evidence="1" type="primary">glyQ</name>
    <name type="ordered locus">LMOf2365_1478</name>
</gene>
<evidence type="ECO:0000255" key="1">
    <source>
        <dbReference type="HAMAP-Rule" id="MF_00254"/>
    </source>
</evidence>